<feature type="chain" id="PRO_0000113345" description="Malate dehydrogenase">
    <location>
        <begin position="1"/>
        <end position="22" status="greater than"/>
    </location>
</feature>
<feature type="binding site" evidence="1">
    <location>
        <begin position="9"/>
        <end position="15"/>
    </location>
    <ligand>
        <name>NAD(+)</name>
        <dbReference type="ChEBI" id="CHEBI:57540"/>
    </ligand>
</feature>
<feature type="non-terminal residue">
    <location>
        <position position="22"/>
    </location>
</feature>
<dbReference type="EC" id="1.1.1.37"/>
<dbReference type="PIR" id="S04959">
    <property type="entry name" value="S04959"/>
</dbReference>
<dbReference type="GO" id="GO:0030060">
    <property type="term" value="F:L-malate dehydrogenase (NAD+) activity"/>
    <property type="evidence" value="ECO:0007669"/>
    <property type="project" value="UniProtKB-EC"/>
</dbReference>
<dbReference type="GO" id="GO:0006099">
    <property type="term" value="P:tricarboxylic acid cycle"/>
    <property type="evidence" value="ECO:0007669"/>
    <property type="project" value="UniProtKB-KW"/>
</dbReference>
<dbReference type="InterPro" id="IPR036291">
    <property type="entry name" value="NAD(P)-bd_dom_sf"/>
</dbReference>
<dbReference type="SUPFAM" id="SSF51735">
    <property type="entry name" value="NAD(P)-binding Rossmann-fold domains"/>
    <property type="match status" value="1"/>
</dbReference>
<proteinExistence type="evidence at protein level"/>
<reference key="1">
    <citation type="journal article" date="1989" name="Biol. Chem. Hoppe-Seyler">
        <title>Purification and N-terminal amino-acid sequences of bacterial malate dehydrogenases from six actinomycetales strains and from Phenylobacterium immobile, strain E.</title>
        <authorList>
            <person name="Rommel T.O."/>
            <person name="Hund H.-K."/>
            <person name="Speth A.R."/>
            <person name="Lingens F."/>
        </authorList>
    </citation>
    <scope>PROTEIN SEQUENCE</scope>
</reference>
<name>MDH_ACTMI</name>
<evidence type="ECO:0000250" key="1"/>
<evidence type="ECO:0000255" key="2">
    <source>
        <dbReference type="PROSITE-ProRule" id="PRU10004"/>
    </source>
</evidence>
<evidence type="ECO:0000305" key="3"/>
<gene>
    <name type="primary">mdh</name>
</gene>
<keyword id="KW-0903">Direct protein sequencing</keyword>
<keyword id="KW-0520">NAD</keyword>
<keyword id="KW-0560">Oxidoreductase</keyword>
<keyword id="KW-0816">Tricarboxylic acid cycle</keyword>
<comment type="function">
    <text evidence="1">Catalyzes the reversible oxidation of malate to oxaloacetate.</text>
</comment>
<comment type="catalytic activity">
    <reaction evidence="2">
        <text>(S)-malate + NAD(+) = oxaloacetate + NADH + H(+)</text>
        <dbReference type="Rhea" id="RHEA:21432"/>
        <dbReference type="ChEBI" id="CHEBI:15378"/>
        <dbReference type="ChEBI" id="CHEBI:15589"/>
        <dbReference type="ChEBI" id="CHEBI:16452"/>
        <dbReference type="ChEBI" id="CHEBI:57540"/>
        <dbReference type="ChEBI" id="CHEBI:57945"/>
        <dbReference type="EC" id="1.1.1.37"/>
    </reaction>
</comment>
<comment type="similarity">
    <text evidence="3">Belongs to the LDH/MDH superfamily. MDH type 2 family.</text>
</comment>
<protein>
    <recommendedName>
        <fullName>Malate dehydrogenase</fullName>
        <ecNumber>1.1.1.37</ecNumber>
    </recommendedName>
</protein>
<accession>P19977</accession>
<sequence>AEPNVTVTGAAGQIGYALLFRI</sequence>
<organism>
    <name type="scientific">Actinoplanes missouriensis</name>
    <dbReference type="NCBI Taxonomy" id="1866"/>
    <lineage>
        <taxon>Bacteria</taxon>
        <taxon>Bacillati</taxon>
        <taxon>Actinomycetota</taxon>
        <taxon>Actinomycetes</taxon>
        <taxon>Micromonosporales</taxon>
        <taxon>Micromonosporaceae</taxon>
        <taxon>Actinoplanes</taxon>
    </lineage>
</organism>